<dbReference type="EMBL" id="CM000127">
    <property type="protein sequence ID" value="EAY84742.1"/>
    <property type="molecule type" value="Genomic_DNA"/>
</dbReference>
<dbReference type="SMR" id="A2X1N2"/>
<dbReference type="STRING" id="39946.A2X1N2"/>
<dbReference type="EnsemblPlants" id="BGIOSGA007015-TA">
    <property type="protein sequence ID" value="BGIOSGA007015-PA"/>
    <property type="gene ID" value="BGIOSGA007015"/>
</dbReference>
<dbReference type="EnsemblPlants" id="OsIR64_02g0006170.01">
    <property type="protein sequence ID" value="OsIR64_02g0006170.01"/>
    <property type="gene ID" value="OsIR64_02g0006170"/>
</dbReference>
<dbReference type="EnsemblPlants" id="OsLaMu_02g0006170.02">
    <property type="protein sequence ID" value="OsLaMu_02g0006170.02"/>
    <property type="gene ID" value="OsLaMu_02g0006170"/>
</dbReference>
<dbReference type="EnsemblPlants" id="OsMH63_02G006440_01">
    <property type="protein sequence ID" value="OsMH63_02G006440_01"/>
    <property type="gene ID" value="OsMH63_02G006440"/>
</dbReference>
<dbReference type="EnsemblPlants" id="OsPr106_02g0006190.01">
    <property type="protein sequence ID" value="OsPr106_02g0006190.01"/>
    <property type="gene ID" value="OsPr106_02g0006190"/>
</dbReference>
<dbReference type="EnsemblPlants" id="OsZS97_02G006090_01">
    <property type="protein sequence ID" value="OsZS97_02G006090_01"/>
    <property type="gene ID" value="OsZS97_02G006090"/>
</dbReference>
<dbReference type="Gramene" id="BGIOSGA007015-TA">
    <property type="protein sequence ID" value="BGIOSGA007015-PA"/>
    <property type="gene ID" value="BGIOSGA007015"/>
</dbReference>
<dbReference type="Gramene" id="OsIR64_02g0006170.01">
    <property type="protein sequence ID" value="OsIR64_02g0006170.01"/>
    <property type="gene ID" value="OsIR64_02g0006170"/>
</dbReference>
<dbReference type="Gramene" id="OsLaMu_02g0006170.02">
    <property type="protein sequence ID" value="OsLaMu_02g0006170.02"/>
    <property type="gene ID" value="OsLaMu_02g0006170"/>
</dbReference>
<dbReference type="Gramene" id="OsMH63_02G006440_01">
    <property type="protein sequence ID" value="OsMH63_02G006440_01"/>
    <property type="gene ID" value="OsMH63_02G006440"/>
</dbReference>
<dbReference type="Gramene" id="OsPr106_02g0006190.01">
    <property type="protein sequence ID" value="OsPr106_02g0006190.01"/>
    <property type="gene ID" value="OsPr106_02g0006190"/>
</dbReference>
<dbReference type="Gramene" id="OsZS97_02G006090_01">
    <property type="protein sequence ID" value="OsZS97_02G006090_01"/>
    <property type="gene ID" value="OsZS97_02G006090"/>
</dbReference>
<dbReference type="HOGENOM" id="CLU_024359_0_2_1"/>
<dbReference type="OMA" id="YIDGDWE"/>
<dbReference type="Proteomes" id="UP000007015">
    <property type="component" value="Chromosome 2"/>
</dbReference>
<dbReference type="GO" id="GO:0005634">
    <property type="term" value="C:nucleus"/>
    <property type="evidence" value="ECO:0007669"/>
    <property type="project" value="UniProtKB-SubCell"/>
</dbReference>
<dbReference type="GO" id="GO:0003677">
    <property type="term" value="F:DNA binding"/>
    <property type="evidence" value="ECO:0007669"/>
    <property type="project" value="UniProtKB-KW"/>
</dbReference>
<dbReference type="GO" id="GO:0003700">
    <property type="term" value="F:DNA-binding transcription factor activity"/>
    <property type="evidence" value="ECO:0007669"/>
    <property type="project" value="InterPro"/>
</dbReference>
<dbReference type="GO" id="GO:0009736">
    <property type="term" value="P:cytokinin-activated signaling pathway"/>
    <property type="evidence" value="ECO:0007669"/>
    <property type="project" value="UniProtKB-KW"/>
</dbReference>
<dbReference type="GO" id="GO:0000160">
    <property type="term" value="P:phosphorelay signal transduction system"/>
    <property type="evidence" value="ECO:0007669"/>
    <property type="project" value="UniProtKB-KW"/>
</dbReference>
<dbReference type="CDD" id="cd17584">
    <property type="entry name" value="REC_typeB_ARR-like"/>
    <property type="match status" value="1"/>
</dbReference>
<dbReference type="FunFam" id="1.10.10.60:FF:000007">
    <property type="entry name" value="Two-component response regulator"/>
    <property type="match status" value="1"/>
</dbReference>
<dbReference type="FunFam" id="3.40.50.2300:FF:000132">
    <property type="entry name" value="Two-component response regulator"/>
    <property type="match status" value="1"/>
</dbReference>
<dbReference type="Gene3D" id="3.40.50.2300">
    <property type="match status" value="1"/>
</dbReference>
<dbReference type="Gene3D" id="1.10.10.60">
    <property type="entry name" value="Homeodomain-like"/>
    <property type="match status" value="1"/>
</dbReference>
<dbReference type="InterPro" id="IPR045279">
    <property type="entry name" value="ARR-like"/>
</dbReference>
<dbReference type="InterPro" id="IPR011006">
    <property type="entry name" value="CheY-like_superfamily"/>
</dbReference>
<dbReference type="InterPro" id="IPR009057">
    <property type="entry name" value="Homeodomain-like_sf"/>
</dbReference>
<dbReference type="InterPro" id="IPR017930">
    <property type="entry name" value="Myb_dom"/>
</dbReference>
<dbReference type="InterPro" id="IPR006447">
    <property type="entry name" value="Myb_dom_plants"/>
</dbReference>
<dbReference type="InterPro" id="IPR017053">
    <property type="entry name" value="Response_reg_B-typ_pln"/>
</dbReference>
<dbReference type="InterPro" id="IPR001005">
    <property type="entry name" value="SANT/Myb"/>
</dbReference>
<dbReference type="InterPro" id="IPR001789">
    <property type="entry name" value="Sig_transdc_resp-reg_receiver"/>
</dbReference>
<dbReference type="NCBIfam" id="TIGR01557">
    <property type="entry name" value="myb_SHAQKYF"/>
    <property type="match status" value="1"/>
</dbReference>
<dbReference type="PANTHER" id="PTHR43874">
    <property type="entry name" value="TWO-COMPONENT RESPONSE REGULATOR"/>
    <property type="match status" value="1"/>
</dbReference>
<dbReference type="PANTHER" id="PTHR43874:SF7">
    <property type="entry name" value="TWO-COMPONENT RESPONSE REGULATOR ARR10"/>
    <property type="match status" value="1"/>
</dbReference>
<dbReference type="Pfam" id="PF00249">
    <property type="entry name" value="Myb_DNA-binding"/>
    <property type="match status" value="1"/>
</dbReference>
<dbReference type="Pfam" id="PF00072">
    <property type="entry name" value="Response_reg"/>
    <property type="match status" value="1"/>
</dbReference>
<dbReference type="PIRSF" id="PIRSF036392">
    <property type="entry name" value="RR_ARR_type-B"/>
    <property type="match status" value="1"/>
</dbReference>
<dbReference type="SMART" id="SM00448">
    <property type="entry name" value="REC"/>
    <property type="match status" value="1"/>
</dbReference>
<dbReference type="SUPFAM" id="SSF52172">
    <property type="entry name" value="CheY-like"/>
    <property type="match status" value="1"/>
</dbReference>
<dbReference type="SUPFAM" id="SSF46689">
    <property type="entry name" value="Homeodomain-like"/>
    <property type="match status" value="1"/>
</dbReference>
<dbReference type="PROSITE" id="PS51294">
    <property type="entry name" value="HTH_MYB"/>
    <property type="match status" value="1"/>
</dbReference>
<dbReference type="PROSITE" id="PS50110">
    <property type="entry name" value="RESPONSE_REGULATORY"/>
    <property type="match status" value="1"/>
</dbReference>
<keyword id="KW-0010">Activator</keyword>
<keyword id="KW-0932">Cytokinin signaling pathway</keyword>
<keyword id="KW-0238">DNA-binding</keyword>
<keyword id="KW-0539">Nucleus</keyword>
<keyword id="KW-0597">Phosphoprotein</keyword>
<keyword id="KW-1185">Reference proteome</keyword>
<keyword id="KW-0804">Transcription</keyword>
<keyword id="KW-0805">Transcription regulation</keyword>
<keyword id="KW-0902">Two-component regulatory system</keyword>
<proteinExistence type="inferred from homology"/>
<accession>A2X1N2</accession>
<feature type="chain" id="PRO_0000433847" description="Two-component response regulator ORR24">
    <location>
        <begin position="1"/>
        <end position="626"/>
    </location>
</feature>
<feature type="domain" description="Response regulatory" evidence="2">
    <location>
        <begin position="30"/>
        <end position="145"/>
    </location>
</feature>
<feature type="DNA-binding region" description="Myb-like GARP" evidence="3">
    <location>
        <begin position="210"/>
        <end position="269"/>
    </location>
</feature>
<feature type="region of interest" description="Disordered" evidence="4">
    <location>
        <begin position="1"/>
        <end position="22"/>
    </location>
</feature>
<feature type="region of interest" description="Disordered" evidence="4">
    <location>
        <begin position="151"/>
        <end position="215"/>
    </location>
</feature>
<feature type="region of interest" description="Disordered" evidence="4">
    <location>
        <begin position="400"/>
        <end position="440"/>
    </location>
</feature>
<feature type="compositionally biased region" description="Gly residues" evidence="4">
    <location>
        <begin position="9"/>
        <end position="22"/>
    </location>
</feature>
<feature type="compositionally biased region" description="Basic and acidic residues" evidence="4">
    <location>
        <begin position="151"/>
        <end position="162"/>
    </location>
</feature>
<feature type="compositionally biased region" description="Acidic residues" evidence="4">
    <location>
        <begin position="191"/>
        <end position="202"/>
    </location>
</feature>
<feature type="compositionally biased region" description="Polar residues" evidence="4">
    <location>
        <begin position="400"/>
        <end position="421"/>
    </location>
</feature>
<feature type="modified residue" description="4-aspartylphosphate" evidence="2">
    <location>
        <position position="81"/>
    </location>
</feature>
<gene>
    <name evidence="5" type="primary">RR24</name>
    <name evidence="6" type="ORF">OsI_06112</name>
</gene>
<sequence>MTVEERQGRVGGHGVSGGGGGRDQFPVGMRVLAVDDDPTCLKILENLLLRCQYHVTTTGQAATALKLLRENKDQFDLVISDVHMPDMDGFKLLELVGLEMDLPVIMLSANGETQTVMKGITHGACDYLLKPVRLEQLRTIWQHVIRRKNCDAKNRGNDDDAGQKAQGMNNEGESIGANRNKRQSRKSRDENGDDGDDSDENSNENGDSSTQKKPRVVWSVELHRKFVAAVNQLGIEKAVPKKILDLMNVENITRENVASHLQKYRLYLKRLSTDASRQANLAAAFGGRNPAYINMNSFGNYNAYGRYRTVPTAGHTQANNILTRMNSPSAFGVHGLLHSQPIQLGHAQNNLSTSLNDLGGLNNGNMIRGAQMSTILTGPSGNSFPNISNGAPLATANRSLQPLESSSQQHLSRVHSSSADPFSTLVGESPQFPDLGRTTNTWQTAVPSNIQDRGHNDNMSQATLHMNGPKIEPVSSFTSSNQIPLLGNEMQGQVASLASNVPIAFNQDTSPFNYGSSTNSRDMLNNSHVFSNSSINTSLPNLSLDNPAVPKQTLDRGNTGIVSPMQDGRIHHQAVSNQLNYNDDLMRTTGLQRGLSGGLDDIVVDMFRPDREDDGVPYIDGDWELV</sequence>
<comment type="function">
    <text evidence="1">Transcriptional activator that binds specific DNA sequence. Functions as a response regulator involved in His-to-Asp phosphorelay signal transduction system. Phosphorylation of the Asp residue in the receiver domain activates the ability of the protein to promote the transcription of target genes. May directly activate some type-A response regulators in response to cytokinins.</text>
</comment>
<comment type="subcellular location">
    <subcellularLocation>
        <location evidence="3">Nucleus</location>
    </subcellularLocation>
</comment>
<comment type="PTM">
    <text evidence="5">Two-component system major event consists of a His-to-Asp phosphorelay between a sensor histidine kinase (HK) and a response regulator (RR). In plants, the His-to-Asp phosphorelay involves an additional intermediate named Histidine-containing phosphotransfer protein (HPt). This multistep phosphorelay consists of a His-Asp-His-Asp sequential transfer of a phosphate group between first a His and an Asp of the HK protein, followed by the transfer to a conserved His of the HPt protein and finally the transfer to an Asp in the receiver domain of the RR protein.</text>
</comment>
<comment type="similarity">
    <text evidence="5">Belongs to the ARR family. Type-B subfamily.</text>
</comment>
<organism>
    <name type="scientific">Oryza sativa subsp. indica</name>
    <name type="common">Rice</name>
    <dbReference type="NCBI Taxonomy" id="39946"/>
    <lineage>
        <taxon>Eukaryota</taxon>
        <taxon>Viridiplantae</taxon>
        <taxon>Streptophyta</taxon>
        <taxon>Embryophyta</taxon>
        <taxon>Tracheophyta</taxon>
        <taxon>Spermatophyta</taxon>
        <taxon>Magnoliopsida</taxon>
        <taxon>Liliopsida</taxon>
        <taxon>Poales</taxon>
        <taxon>Poaceae</taxon>
        <taxon>BOP clade</taxon>
        <taxon>Oryzoideae</taxon>
        <taxon>Oryzeae</taxon>
        <taxon>Oryzinae</taxon>
        <taxon>Oryza</taxon>
        <taxon>Oryza sativa</taxon>
    </lineage>
</organism>
<protein>
    <recommendedName>
        <fullName evidence="5">Two-component response regulator ORR24</fullName>
    </recommendedName>
</protein>
<evidence type="ECO:0000250" key="1">
    <source>
        <dbReference type="UniProtKB" id="Q940D0"/>
    </source>
</evidence>
<evidence type="ECO:0000255" key="2">
    <source>
        <dbReference type="PROSITE-ProRule" id="PRU00169"/>
    </source>
</evidence>
<evidence type="ECO:0000255" key="3">
    <source>
        <dbReference type="PROSITE-ProRule" id="PRU00625"/>
    </source>
</evidence>
<evidence type="ECO:0000256" key="4">
    <source>
        <dbReference type="SAM" id="MobiDB-lite"/>
    </source>
</evidence>
<evidence type="ECO:0000305" key="5"/>
<evidence type="ECO:0000312" key="6">
    <source>
        <dbReference type="EMBL" id="EAY84742.1"/>
    </source>
</evidence>
<name>ORR24_ORYSI</name>
<reference key="1">
    <citation type="journal article" date="2005" name="PLoS Biol.">
        <title>The genomes of Oryza sativa: a history of duplications.</title>
        <authorList>
            <person name="Yu J."/>
            <person name="Wang J."/>
            <person name="Lin W."/>
            <person name="Li S."/>
            <person name="Li H."/>
            <person name="Zhou J."/>
            <person name="Ni P."/>
            <person name="Dong W."/>
            <person name="Hu S."/>
            <person name="Zeng C."/>
            <person name="Zhang J."/>
            <person name="Zhang Y."/>
            <person name="Li R."/>
            <person name="Xu Z."/>
            <person name="Li S."/>
            <person name="Li X."/>
            <person name="Zheng H."/>
            <person name="Cong L."/>
            <person name="Lin L."/>
            <person name="Yin J."/>
            <person name="Geng J."/>
            <person name="Li G."/>
            <person name="Shi J."/>
            <person name="Liu J."/>
            <person name="Lv H."/>
            <person name="Li J."/>
            <person name="Wang J."/>
            <person name="Deng Y."/>
            <person name="Ran L."/>
            <person name="Shi X."/>
            <person name="Wang X."/>
            <person name="Wu Q."/>
            <person name="Li C."/>
            <person name="Ren X."/>
            <person name="Wang J."/>
            <person name="Wang X."/>
            <person name="Li D."/>
            <person name="Liu D."/>
            <person name="Zhang X."/>
            <person name="Ji Z."/>
            <person name="Zhao W."/>
            <person name="Sun Y."/>
            <person name="Zhang Z."/>
            <person name="Bao J."/>
            <person name="Han Y."/>
            <person name="Dong L."/>
            <person name="Ji J."/>
            <person name="Chen P."/>
            <person name="Wu S."/>
            <person name="Liu J."/>
            <person name="Xiao Y."/>
            <person name="Bu D."/>
            <person name="Tan J."/>
            <person name="Yang L."/>
            <person name="Ye C."/>
            <person name="Zhang J."/>
            <person name="Xu J."/>
            <person name="Zhou Y."/>
            <person name="Yu Y."/>
            <person name="Zhang B."/>
            <person name="Zhuang S."/>
            <person name="Wei H."/>
            <person name="Liu B."/>
            <person name="Lei M."/>
            <person name="Yu H."/>
            <person name="Li Y."/>
            <person name="Xu H."/>
            <person name="Wei S."/>
            <person name="He X."/>
            <person name="Fang L."/>
            <person name="Zhang Z."/>
            <person name="Zhang Y."/>
            <person name="Huang X."/>
            <person name="Su Z."/>
            <person name="Tong W."/>
            <person name="Li J."/>
            <person name="Tong Z."/>
            <person name="Li S."/>
            <person name="Ye J."/>
            <person name="Wang L."/>
            <person name="Fang L."/>
            <person name="Lei T."/>
            <person name="Chen C.-S."/>
            <person name="Chen H.-C."/>
            <person name="Xu Z."/>
            <person name="Li H."/>
            <person name="Huang H."/>
            <person name="Zhang F."/>
            <person name="Xu H."/>
            <person name="Li N."/>
            <person name="Zhao C."/>
            <person name="Li S."/>
            <person name="Dong L."/>
            <person name="Huang Y."/>
            <person name="Li L."/>
            <person name="Xi Y."/>
            <person name="Qi Q."/>
            <person name="Li W."/>
            <person name="Zhang B."/>
            <person name="Hu W."/>
            <person name="Zhang Y."/>
            <person name="Tian X."/>
            <person name="Jiao Y."/>
            <person name="Liang X."/>
            <person name="Jin J."/>
            <person name="Gao L."/>
            <person name="Zheng W."/>
            <person name="Hao B."/>
            <person name="Liu S.-M."/>
            <person name="Wang W."/>
            <person name="Yuan L."/>
            <person name="Cao M."/>
            <person name="McDermott J."/>
            <person name="Samudrala R."/>
            <person name="Wang J."/>
            <person name="Wong G.K.-S."/>
            <person name="Yang H."/>
        </authorList>
    </citation>
    <scope>NUCLEOTIDE SEQUENCE [LARGE SCALE GENOMIC DNA]</scope>
    <source>
        <strain>cv. 93-11</strain>
    </source>
</reference>